<organism>
    <name type="scientific">Oryza sativa subsp. japonica</name>
    <name type="common">Rice</name>
    <dbReference type="NCBI Taxonomy" id="39947"/>
    <lineage>
        <taxon>Eukaryota</taxon>
        <taxon>Viridiplantae</taxon>
        <taxon>Streptophyta</taxon>
        <taxon>Embryophyta</taxon>
        <taxon>Tracheophyta</taxon>
        <taxon>Spermatophyta</taxon>
        <taxon>Magnoliopsida</taxon>
        <taxon>Liliopsida</taxon>
        <taxon>Poales</taxon>
        <taxon>Poaceae</taxon>
        <taxon>BOP clade</taxon>
        <taxon>Oryzoideae</taxon>
        <taxon>Oryzeae</taxon>
        <taxon>Oryzinae</taxon>
        <taxon>Oryza</taxon>
        <taxon>Oryza sativa</taxon>
    </lineage>
</organism>
<comment type="sequence caution" evidence="5">
    <conflict type="erroneous initiation">
        <sequence resource="EMBL-CDS" id="BAF14567"/>
    </conflict>
</comment>
<comment type="sequence caution" evidence="5">
    <conflict type="erroneous gene model prediction">
        <sequence resource="EMBL-CDS" id="CAD40551"/>
    </conflict>
</comment>
<gene>
    <name type="ordered locus">Os04g0394300</name>
    <name type="ordered locus">LOC_Os04g32340</name>
    <name type="ORF">OSJNBa0072K14.6</name>
</gene>
<evidence type="ECO:0000255" key="1"/>
<evidence type="ECO:0000255" key="2">
    <source>
        <dbReference type="PROSITE-ProRule" id="PRU00176"/>
    </source>
</evidence>
<evidence type="ECO:0000255" key="3">
    <source>
        <dbReference type="PROSITE-ProRule" id="PRU00723"/>
    </source>
</evidence>
<evidence type="ECO:0000256" key="4">
    <source>
        <dbReference type="SAM" id="MobiDB-lite"/>
    </source>
</evidence>
<evidence type="ECO:0000305" key="5"/>
<reference key="1">
    <citation type="journal article" date="2002" name="Nature">
        <title>Sequence and analysis of rice chromosome 4.</title>
        <authorList>
            <person name="Feng Q."/>
            <person name="Zhang Y."/>
            <person name="Hao P."/>
            <person name="Wang S."/>
            <person name="Fu G."/>
            <person name="Huang Y."/>
            <person name="Li Y."/>
            <person name="Zhu J."/>
            <person name="Liu Y."/>
            <person name="Hu X."/>
            <person name="Jia P."/>
            <person name="Zhang Y."/>
            <person name="Zhao Q."/>
            <person name="Ying K."/>
            <person name="Yu S."/>
            <person name="Tang Y."/>
            <person name="Weng Q."/>
            <person name="Zhang L."/>
            <person name="Lu Y."/>
            <person name="Mu J."/>
            <person name="Lu Y."/>
            <person name="Zhang L.S."/>
            <person name="Yu Z."/>
            <person name="Fan D."/>
            <person name="Liu X."/>
            <person name="Lu T."/>
            <person name="Li C."/>
            <person name="Wu Y."/>
            <person name="Sun T."/>
            <person name="Lei H."/>
            <person name="Li T."/>
            <person name="Hu H."/>
            <person name="Guan J."/>
            <person name="Wu M."/>
            <person name="Zhang R."/>
            <person name="Zhou B."/>
            <person name="Chen Z."/>
            <person name="Chen L."/>
            <person name="Jin Z."/>
            <person name="Wang R."/>
            <person name="Yin H."/>
            <person name="Cai Z."/>
            <person name="Ren S."/>
            <person name="Lv G."/>
            <person name="Gu W."/>
            <person name="Zhu G."/>
            <person name="Tu Y."/>
            <person name="Jia J."/>
            <person name="Zhang Y."/>
            <person name="Chen J."/>
            <person name="Kang H."/>
            <person name="Chen X."/>
            <person name="Shao C."/>
            <person name="Sun Y."/>
            <person name="Hu Q."/>
            <person name="Zhang X."/>
            <person name="Zhang W."/>
            <person name="Wang L."/>
            <person name="Ding C."/>
            <person name="Sheng H."/>
            <person name="Gu J."/>
            <person name="Chen S."/>
            <person name="Ni L."/>
            <person name="Zhu F."/>
            <person name="Chen W."/>
            <person name="Lan L."/>
            <person name="Lai Y."/>
            <person name="Cheng Z."/>
            <person name="Gu M."/>
            <person name="Jiang J."/>
            <person name="Li J."/>
            <person name="Hong G."/>
            <person name="Xue Y."/>
            <person name="Han B."/>
        </authorList>
    </citation>
    <scope>NUCLEOTIDE SEQUENCE [LARGE SCALE GENOMIC DNA]</scope>
    <source>
        <strain>cv. Nipponbare</strain>
    </source>
</reference>
<reference key="2">
    <citation type="journal article" date="2005" name="Nature">
        <title>The map-based sequence of the rice genome.</title>
        <authorList>
            <consortium name="International rice genome sequencing project (IRGSP)"/>
        </authorList>
    </citation>
    <scope>NUCLEOTIDE SEQUENCE [LARGE SCALE GENOMIC DNA]</scope>
    <source>
        <strain>cv. Nipponbare</strain>
    </source>
</reference>
<reference key="3">
    <citation type="journal article" date="2008" name="Nucleic Acids Res.">
        <title>The rice annotation project database (RAP-DB): 2008 update.</title>
        <authorList>
            <consortium name="The rice annotation project (RAP)"/>
        </authorList>
    </citation>
    <scope>GENOME REANNOTATION</scope>
    <source>
        <strain>cv. Nipponbare</strain>
    </source>
</reference>
<reference key="4">
    <citation type="journal article" date="2013" name="Rice">
        <title>Improvement of the Oryza sativa Nipponbare reference genome using next generation sequence and optical map data.</title>
        <authorList>
            <person name="Kawahara Y."/>
            <person name="de la Bastide M."/>
            <person name="Hamilton J.P."/>
            <person name="Kanamori H."/>
            <person name="McCombie W.R."/>
            <person name="Ouyang S."/>
            <person name="Schwartz D.C."/>
            <person name="Tanaka T."/>
            <person name="Wu J."/>
            <person name="Zhou S."/>
            <person name="Childs K.L."/>
            <person name="Davidson R.M."/>
            <person name="Lin H."/>
            <person name="Quesada-Ocampo L."/>
            <person name="Vaillancourt B."/>
            <person name="Sakai H."/>
            <person name="Lee S.S."/>
            <person name="Kim J."/>
            <person name="Numa H."/>
            <person name="Itoh T."/>
            <person name="Buell C.R."/>
            <person name="Matsumoto T."/>
        </authorList>
    </citation>
    <scope>GENOME REANNOTATION</scope>
    <source>
        <strain>cv. Nipponbare</strain>
    </source>
</reference>
<reference key="5">
    <citation type="journal article" date="2003" name="Science">
        <title>Collection, mapping, and annotation of over 28,000 cDNA clones from japonica rice.</title>
        <authorList>
            <consortium name="The rice full-length cDNA consortium"/>
        </authorList>
    </citation>
    <scope>NUCLEOTIDE SEQUENCE [LARGE SCALE MRNA]</scope>
    <source>
        <strain>cv. Nipponbare</strain>
    </source>
</reference>
<reference key="6">
    <citation type="journal article" date="2008" name="BMC Genomics">
        <title>Genome-wide analysis of CCCH zinc finger family in Arabidopsis and rice.</title>
        <authorList>
            <person name="Wang D."/>
            <person name="Guo Y."/>
            <person name="Wu C."/>
            <person name="Yang G."/>
            <person name="Li Y."/>
            <person name="Zheng C."/>
        </authorList>
    </citation>
    <scope>NOMENCLATURE</scope>
</reference>
<name>C3H27_ORYSJ</name>
<keyword id="KW-0175">Coiled coil</keyword>
<keyword id="KW-0238">DNA-binding</keyword>
<keyword id="KW-0479">Metal-binding</keyword>
<keyword id="KW-1185">Reference proteome</keyword>
<keyword id="KW-0694">RNA-binding</keyword>
<keyword id="KW-0862">Zinc</keyword>
<keyword id="KW-0863">Zinc-finger</keyword>
<protein>
    <recommendedName>
        <fullName>Zinc finger CCCH domain-containing protein 27</fullName>
        <shortName>OsC3H27</shortName>
    </recommendedName>
</protein>
<feature type="chain" id="PRO_0000346822" description="Zinc finger CCCH domain-containing protein 27">
    <location>
        <begin position="1"/>
        <end position="903"/>
    </location>
</feature>
<feature type="domain" description="RRM" evidence="2">
    <location>
        <begin position="459"/>
        <end position="531"/>
    </location>
</feature>
<feature type="zinc finger region" description="C3H1-type" evidence="3">
    <location>
        <begin position="225"/>
        <end position="253"/>
    </location>
</feature>
<feature type="region of interest" description="Disordered" evidence="4">
    <location>
        <begin position="1"/>
        <end position="144"/>
    </location>
</feature>
<feature type="region of interest" description="Disordered" evidence="4">
    <location>
        <begin position="390"/>
        <end position="456"/>
    </location>
</feature>
<feature type="region of interest" description="Disordered" evidence="4">
    <location>
        <begin position="545"/>
        <end position="609"/>
    </location>
</feature>
<feature type="region of interest" description="Disordered" evidence="4">
    <location>
        <begin position="642"/>
        <end position="720"/>
    </location>
</feature>
<feature type="region of interest" description="Disordered" evidence="4">
    <location>
        <begin position="826"/>
        <end position="903"/>
    </location>
</feature>
<feature type="coiled-coil region" evidence="1">
    <location>
        <begin position="608"/>
        <end position="649"/>
    </location>
</feature>
<feature type="compositionally biased region" description="Basic and acidic residues" evidence="4">
    <location>
        <begin position="11"/>
        <end position="24"/>
    </location>
</feature>
<feature type="compositionally biased region" description="Acidic residues" evidence="4">
    <location>
        <begin position="33"/>
        <end position="46"/>
    </location>
</feature>
<feature type="compositionally biased region" description="Basic and acidic residues" evidence="4">
    <location>
        <begin position="86"/>
        <end position="96"/>
    </location>
</feature>
<feature type="compositionally biased region" description="Low complexity" evidence="4">
    <location>
        <begin position="397"/>
        <end position="410"/>
    </location>
</feature>
<feature type="compositionally biased region" description="Polar residues" evidence="4">
    <location>
        <begin position="432"/>
        <end position="441"/>
    </location>
</feature>
<feature type="compositionally biased region" description="Polar residues" evidence="4">
    <location>
        <begin position="556"/>
        <end position="576"/>
    </location>
</feature>
<feature type="compositionally biased region" description="Low complexity" evidence="4">
    <location>
        <begin position="577"/>
        <end position="587"/>
    </location>
</feature>
<feature type="compositionally biased region" description="Low complexity" evidence="4">
    <location>
        <begin position="693"/>
        <end position="708"/>
    </location>
</feature>
<feature type="compositionally biased region" description="Polar residues" evidence="4">
    <location>
        <begin position="826"/>
        <end position="886"/>
    </location>
</feature>
<proteinExistence type="evidence at transcript level"/>
<accession>Q0JDM0</accession>
<accession>B7F489</accession>
<accession>Q7XVM3</accession>
<dbReference type="EMBL" id="AL606621">
    <property type="protein sequence ID" value="CAD40551.1"/>
    <property type="status" value="ALT_SEQ"/>
    <property type="molecule type" value="Genomic_DNA"/>
</dbReference>
<dbReference type="EMBL" id="AP008210">
    <property type="protein sequence ID" value="BAF14567.1"/>
    <property type="status" value="ALT_INIT"/>
    <property type="molecule type" value="Genomic_DNA"/>
</dbReference>
<dbReference type="EMBL" id="AP014960">
    <property type="protein sequence ID" value="BAS88993.1"/>
    <property type="molecule type" value="Genomic_DNA"/>
</dbReference>
<dbReference type="EMBL" id="AK111819">
    <property type="protein sequence ID" value="BAG99436.1"/>
    <property type="molecule type" value="mRNA"/>
</dbReference>
<dbReference type="RefSeq" id="XP_015636478.1">
    <property type="nucleotide sequence ID" value="XM_015780992.1"/>
</dbReference>
<dbReference type="SMR" id="Q0JDM0"/>
<dbReference type="FunCoup" id="Q0JDM0">
    <property type="interactions" value="2069"/>
</dbReference>
<dbReference type="STRING" id="39947.Q0JDM0"/>
<dbReference type="PaxDb" id="39947-Q0JDM0"/>
<dbReference type="EnsemblPlants" id="Os04t0394300-01">
    <property type="protein sequence ID" value="Os04t0394300-01"/>
    <property type="gene ID" value="Os04g0394300"/>
</dbReference>
<dbReference type="Gramene" id="Os04t0394300-01">
    <property type="protein sequence ID" value="Os04t0394300-01"/>
    <property type="gene ID" value="Os04g0394300"/>
</dbReference>
<dbReference type="KEGG" id="dosa:Os04g0394300"/>
<dbReference type="eggNOG" id="KOG2135">
    <property type="taxonomic scope" value="Eukaryota"/>
</dbReference>
<dbReference type="HOGENOM" id="CLU_011820_0_0_1"/>
<dbReference type="InParanoid" id="Q0JDM0"/>
<dbReference type="OMA" id="NESYDEM"/>
<dbReference type="OrthoDB" id="443401at2759"/>
<dbReference type="Proteomes" id="UP000000763">
    <property type="component" value="Chromosome 4"/>
</dbReference>
<dbReference type="Proteomes" id="UP000059680">
    <property type="component" value="Chromosome 4"/>
</dbReference>
<dbReference type="GO" id="GO:0005634">
    <property type="term" value="C:nucleus"/>
    <property type="evidence" value="ECO:0000318"/>
    <property type="project" value="GO_Central"/>
</dbReference>
<dbReference type="GO" id="GO:0003677">
    <property type="term" value="F:DNA binding"/>
    <property type="evidence" value="ECO:0007669"/>
    <property type="project" value="UniProtKB-KW"/>
</dbReference>
<dbReference type="GO" id="GO:0003729">
    <property type="term" value="F:mRNA binding"/>
    <property type="evidence" value="ECO:0007669"/>
    <property type="project" value="EnsemblPlants"/>
</dbReference>
<dbReference type="GO" id="GO:0003723">
    <property type="term" value="F:RNA binding"/>
    <property type="evidence" value="ECO:0000318"/>
    <property type="project" value="GO_Central"/>
</dbReference>
<dbReference type="GO" id="GO:0008270">
    <property type="term" value="F:zinc ion binding"/>
    <property type="evidence" value="ECO:0007669"/>
    <property type="project" value="UniProtKB-KW"/>
</dbReference>
<dbReference type="CDD" id="cd12257">
    <property type="entry name" value="RRM1_RBM26_like"/>
    <property type="match status" value="1"/>
</dbReference>
<dbReference type="FunFam" id="3.30.70.330:FF:000444">
    <property type="entry name" value="Zinc finger CCCH domain-containing protein 27"/>
    <property type="match status" value="1"/>
</dbReference>
<dbReference type="FunFam" id="3.30.70.330:FF:000762">
    <property type="entry name" value="Zinc finger CCCH domain-containing protein 27"/>
    <property type="match status" value="1"/>
</dbReference>
<dbReference type="Gene3D" id="3.30.70.330">
    <property type="match status" value="2"/>
</dbReference>
<dbReference type="InterPro" id="IPR012677">
    <property type="entry name" value="Nucleotide-bd_a/b_plait_sf"/>
</dbReference>
<dbReference type="InterPro" id="IPR035979">
    <property type="entry name" value="RBD_domain_sf"/>
</dbReference>
<dbReference type="InterPro" id="IPR045137">
    <property type="entry name" value="RBM26/27"/>
</dbReference>
<dbReference type="InterPro" id="IPR000504">
    <property type="entry name" value="RRM_dom"/>
</dbReference>
<dbReference type="InterPro" id="IPR000571">
    <property type="entry name" value="Znf_CCCH"/>
</dbReference>
<dbReference type="PANTHER" id="PTHR14398">
    <property type="entry name" value="RNA RECOGNITION RRM/RNP DOMAIN"/>
    <property type="match status" value="1"/>
</dbReference>
<dbReference type="PANTHER" id="PTHR14398:SF0">
    <property type="entry name" value="ZINC FINGER PROTEIN SWM"/>
    <property type="match status" value="1"/>
</dbReference>
<dbReference type="Pfam" id="PF00076">
    <property type="entry name" value="RRM_1"/>
    <property type="match status" value="1"/>
</dbReference>
<dbReference type="SMART" id="SM00360">
    <property type="entry name" value="RRM"/>
    <property type="match status" value="1"/>
</dbReference>
<dbReference type="SMART" id="SM00356">
    <property type="entry name" value="ZnF_C3H1"/>
    <property type="match status" value="1"/>
</dbReference>
<dbReference type="SUPFAM" id="SSF54928">
    <property type="entry name" value="RNA-binding domain, RBD"/>
    <property type="match status" value="2"/>
</dbReference>
<dbReference type="PROSITE" id="PS50102">
    <property type="entry name" value="RRM"/>
    <property type="match status" value="1"/>
</dbReference>
<dbReference type="PROSITE" id="PS50103">
    <property type="entry name" value="ZF_C3H1"/>
    <property type="match status" value="1"/>
</dbReference>
<sequence length="903" mass="97244">MIKESSSPALDADKIEVPSPKDENNSSNSEAATDNEDFEISDDDDDDRNHKHRKREARPQSFDENTEQSPGGPLKKRHKISGGADSHGEAQKDFFPKFKRRPGAGAHSRAPRVNPSFRDSSASVAARAPMTRGRGRNGAPWAQHEPRFNTLEMIDFASQMASQGPPTHPSLFMGPALPSGGSAQNGSWGPYGFMPGMPNGMLDPIHPLGMQGPIQPAISPLIDLGMPRQRCRDFEERGFCLRGDMCPMEHGLNRIVVEDMQSLSQFNLPVTVPNTQGLGIQNEPGTAPVNTSSLGGSKGVPAKDIKSAVTNDVLKLNGTTALAVSDADVYDPDQPLWNNEHPDASAGFAHTDGVWNAESLGYEAAREQGNQVLAADSSQNSKSSVWGRIASKKLGHGKTANATSTSATGNKRNESYDEMAPSTVHVNPASAKDSNGQSNSRIFGDVGRQSNRASHKASRTLYVNGIPLESNRWEALLSHFQKFGQVIDIYIPSNSEKAFVQFSKREEAEAALKAPDAVMGNRFIKLWWANRDRIPDEVEGRIPAKSSHMSAALANSVPQPSSSNRGKENLQSATPRASSGSSAEASGPGTGHKMLPANSVKSLPPDTKRQESLELLEELRKKQEILAQKRDEFRRQLEKLAKQKGLANSAKQAEAGGKEVASNDVHRVTDSKSMNTGTEGPRDAAGTLQNRTSGELASSSHKSSATSAQKPAVATKQTSPLLVPSQNRFKLDNRTTSFRILPPLPPEIADESVLKDHFMSFGELSSVVLEDTEAYNHDATLKPSLSCSACVTYTTRQSAEKAFIGGKSCKGHTLRFMWLTASPGSTNHSRFQKTSIPARASSFSSQTQNMPSESSTTVGKMSSTVKSSTTAKPHSESMPTATSAKTSVEIPKALSSRDSDVSQ</sequence>